<reference key="1">
    <citation type="journal article" date="1997" name="J. Bacteriol.">
        <title>Substrate recognition domains as revealed by active hybrids between the D-arabinitol and ribitol transporters from Klebsiella pneumoniae.</title>
        <authorList>
            <person name="Heuel H."/>
            <person name="Turgut S."/>
            <person name="Schmid K."/>
            <person name="Lengeler J.W."/>
        </authorList>
    </citation>
    <scope>NUCLEOTIDE SEQUENCE [GENOMIC DNA]</scope>
    <source>
        <strain>1033-5P14 / KAY2026</strain>
    </source>
</reference>
<dbReference type="EMBL" id="AF045245">
    <property type="protein sequence ID" value="AAC26500.1"/>
    <property type="molecule type" value="Genomic_DNA"/>
</dbReference>
<dbReference type="RefSeq" id="WP_002912654.1">
    <property type="nucleotide sequence ID" value="NZ_WYAM01000007.1"/>
</dbReference>
<dbReference type="SMR" id="O52718"/>
<dbReference type="TCDB" id="2.A.1.18.1">
    <property type="family name" value="the major facilitator superfamily (mfs)"/>
</dbReference>
<dbReference type="GO" id="GO:0005886">
    <property type="term" value="C:plasma membrane"/>
    <property type="evidence" value="ECO:0007669"/>
    <property type="project" value="UniProtKB-SubCell"/>
</dbReference>
<dbReference type="GO" id="GO:0022857">
    <property type="term" value="F:transmembrane transporter activity"/>
    <property type="evidence" value="ECO:0007669"/>
    <property type="project" value="InterPro"/>
</dbReference>
<dbReference type="CDD" id="cd17337">
    <property type="entry name" value="MFS_CsbX"/>
    <property type="match status" value="1"/>
</dbReference>
<dbReference type="Gene3D" id="1.20.1250.20">
    <property type="entry name" value="MFS general substrate transporter like domains"/>
    <property type="match status" value="2"/>
</dbReference>
<dbReference type="InterPro" id="IPR011701">
    <property type="entry name" value="MFS"/>
</dbReference>
<dbReference type="InterPro" id="IPR020846">
    <property type="entry name" value="MFS_dom"/>
</dbReference>
<dbReference type="InterPro" id="IPR036259">
    <property type="entry name" value="MFS_trans_sf"/>
</dbReference>
<dbReference type="InterPro" id="IPR050171">
    <property type="entry name" value="MFS_Transporters"/>
</dbReference>
<dbReference type="InterPro" id="IPR004748">
    <property type="entry name" value="Polyol_permease-like"/>
</dbReference>
<dbReference type="NCBIfam" id="TIGR00897">
    <property type="entry name" value="2A0118"/>
    <property type="match status" value="1"/>
</dbReference>
<dbReference type="PANTHER" id="PTHR23517">
    <property type="entry name" value="RESISTANCE PROTEIN MDTM, PUTATIVE-RELATED-RELATED"/>
    <property type="match status" value="1"/>
</dbReference>
<dbReference type="Pfam" id="PF07690">
    <property type="entry name" value="MFS_1"/>
    <property type="match status" value="1"/>
</dbReference>
<dbReference type="SUPFAM" id="SSF103473">
    <property type="entry name" value="MFS general substrate transporter"/>
    <property type="match status" value="1"/>
</dbReference>
<dbReference type="PROSITE" id="PS50850">
    <property type="entry name" value="MFS"/>
    <property type="match status" value="1"/>
</dbReference>
<name>DALT_KLEPN</name>
<evidence type="ECO:0000255" key="1"/>
<evidence type="ECO:0000305" key="2"/>
<sequence>MSINNKQWLGLPLNLLWGYIAIAVFMTGDGFELAFLSHYIKALGFSPAEASFAFTLYGLAAALSAWISGVVAEIITPLKTMMIGFVLWCVFHVLFLVFGLGHANYALILLFYGIRGFAYPLFLYSFIVAIVHNVKSDNASSAIGWFWAVYSIGIGVFGSYIPSFTIPHIGEMGTLWLALAFCLTGGVIALVSLRHIQTPQHMQNLTTREKFSELGRAATLLYTNRNILLSSMVRIINTLSLFGFAVIMPMMFVDELGFSTSEWLQVWAVFFFTTIFSNVLWGILGEKLGWMKVVRWFGCIGMALSSLAFYYIPQHFGHSFAMALIPAIALGIFVAAFVPLAAVFPALEPKHKGAAISVYNLSAGMSNFLAPAIAVVLLPFFSTIGVVIAYTALYVVAFFLCAFIRVEQPGFSHKEATAREQVEFS</sequence>
<comment type="subcellular location">
    <subcellularLocation>
        <location evidence="2">Cell membrane</location>
        <topology evidence="2">Multi-pass membrane protein</topology>
    </subcellularLocation>
</comment>
<comment type="similarity">
    <text evidence="2">Belongs to the major facilitator superfamily. Sugar transporter (TC 2.A.1.1) family. CsbX subfamily.</text>
</comment>
<keyword id="KW-1003">Cell membrane</keyword>
<keyword id="KW-0472">Membrane</keyword>
<keyword id="KW-0762">Sugar transport</keyword>
<keyword id="KW-0812">Transmembrane</keyword>
<keyword id="KW-1133">Transmembrane helix</keyword>
<keyword id="KW-0813">Transport</keyword>
<organism>
    <name type="scientific">Klebsiella pneumoniae</name>
    <dbReference type="NCBI Taxonomy" id="573"/>
    <lineage>
        <taxon>Bacteria</taxon>
        <taxon>Pseudomonadati</taxon>
        <taxon>Pseudomonadota</taxon>
        <taxon>Gammaproteobacteria</taxon>
        <taxon>Enterobacterales</taxon>
        <taxon>Enterobacteriaceae</taxon>
        <taxon>Klebsiella/Raoultella group</taxon>
        <taxon>Klebsiella</taxon>
        <taxon>Klebsiella pneumoniae complex</taxon>
    </lineage>
</organism>
<gene>
    <name type="primary">dalT</name>
</gene>
<proteinExistence type="inferred from homology"/>
<protein>
    <recommendedName>
        <fullName>D-arabinitol transporter</fullName>
    </recommendedName>
</protein>
<accession>O52718</accession>
<feature type="chain" id="PRO_0000050497" description="D-arabinitol transporter">
    <location>
        <begin position="1"/>
        <end position="425"/>
    </location>
</feature>
<feature type="topological domain" description="Cytoplasmic" evidence="1">
    <location>
        <begin position="1"/>
        <end position="7"/>
    </location>
</feature>
<feature type="transmembrane region" description="Helical; Name=1" evidence="1">
    <location>
        <begin position="8"/>
        <end position="28"/>
    </location>
</feature>
<feature type="topological domain" description="Extracellular" evidence="1">
    <location>
        <begin position="29"/>
        <end position="51"/>
    </location>
</feature>
<feature type="transmembrane region" description="Helical; Name=2" evidence="1">
    <location>
        <begin position="52"/>
        <end position="72"/>
    </location>
</feature>
<feature type="topological domain" description="Cytoplasmic" evidence="1">
    <location>
        <begin position="73"/>
        <end position="80"/>
    </location>
</feature>
<feature type="transmembrane region" description="Helical; Name=3" evidence="1">
    <location>
        <begin position="81"/>
        <end position="101"/>
    </location>
</feature>
<feature type="topological domain" description="Extracellular" evidence="1">
    <location>
        <begin position="102"/>
        <end position="107"/>
    </location>
</feature>
<feature type="transmembrane region" description="Helical; Name=4" evidence="1">
    <location>
        <begin position="108"/>
        <end position="128"/>
    </location>
</feature>
<feature type="topological domain" description="Cytoplasmic" evidence="1">
    <location>
        <begin position="129"/>
        <end position="141"/>
    </location>
</feature>
<feature type="transmembrane region" description="Helical; Name=5" evidence="1">
    <location>
        <begin position="142"/>
        <end position="162"/>
    </location>
</feature>
<feature type="topological domain" description="Extracellular" evidence="1">
    <location>
        <begin position="163"/>
        <end position="172"/>
    </location>
</feature>
<feature type="transmembrane region" description="Helical; Name=6" evidence="1">
    <location>
        <begin position="173"/>
        <end position="193"/>
    </location>
</feature>
<feature type="topological domain" description="Cytoplasmic" evidence="1">
    <location>
        <begin position="194"/>
        <end position="237"/>
    </location>
</feature>
<feature type="transmembrane region" description="Helical; Name=7" evidence="1">
    <location>
        <begin position="238"/>
        <end position="258"/>
    </location>
</feature>
<feature type="topological domain" description="Extracellular" evidence="1">
    <location>
        <begin position="259"/>
        <end position="263"/>
    </location>
</feature>
<feature type="transmembrane region" description="Helical; Name=8" evidence="1">
    <location>
        <begin position="264"/>
        <end position="284"/>
    </location>
</feature>
<feature type="topological domain" description="Cytoplasmic" evidence="1">
    <location>
        <begin position="285"/>
        <end position="295"/>
    </location>
</feature>
<feature type="transmembrane region" description="Helical; Name=9" evidence="1">
    <location>
        <begin position="296"/>
        <end position="316"/>
    </location>
</feature>
<feature type="topological domain" description="Extracellular" evidence="1">
    <location>
        <begin position="317"/>
        <end position="323"/>
    </location>
</feature>
<feature type="transmembrane region" description="Helical; Name=10" evidence="1">
    <location>
        <begin position="324"/>
        <end position="344"/>
    </location>
</feature>
<feature type="topological domain" description="Cytoplasmic" evidence="1">
    <location>
        <begin position="345"/>
        <end position="360"/>
    </location>
</feature>
<feature type="transmembrane region" description="Helical; Name=11" evidence="1">
    <location>
        <begin position="361"/>
        <end position="381"/>
    </location>
</feature>
<feature type="topological domain" description="Extracellular" evidence="1">
    <location>
        <begin position="382"/>
        <end position="383"/>
    </location>
</feature>
<feature type="transmembrane region" description="Helical; Name=12" evidence="1">
    <location>
        <begin position="384"/>
        <end position="404"/>
    </location>
</feature>
<feature type="topological domain" description="Cytoplasmic" evidence="1">
    <location>
        <begin position="405"/>
        <end position="425"/>
    </location>
</feature>